<reference key="1">
    <citation type="journal article" date="1985" name="Proc. Natl. Acad. Sci. U.S.A.">
        <title>Presence of retrovirus reverse transcriptase-related gene sequences in avian cells lacking endogenous avian leukosis viruses.</title>
        <authorList>
            <person name="Dunwiddie C."/>
            <person name="Faras A.J."/>
        </authorList>
    </citation>
    <scope>NUCLEOTIDE SEQUENCE [GENOMIC DNA]</scope>
</reference>
<reference key="2">
    <citation type="submission" date="1985-10" db="EMBL/GenBank/DDBJ databases">
        <authorList>
            <person name="Dunwiddie C."/>
            <person name="Faras A.J."/>
        </authorList>
    </citation>
    <scope>SEQUENCE REVISION TO 2</scope>
</reference>
<feature type="chain" id="PRO_0000058507" description="Retrovirus-related Pol polyprotein">
    <location>
        <begin position="1" status="less than"/>
        <end position="246" status="greater than"/>
    </location>
</feature>
<feature type="domain" description="Integrase catalytic" evidence="2">
    <location>
        <begin position="202"/>
        <end position="246" status="greater than"/>
    </location>
</feature>
<feature type="zinc finger region" description="Integrase-type" evidence="1">
    <location>
        <begin position="149"/>
        <end position="190"/>
    </location>
</feature>
<feature type="binding site" evidence="1">
    <location>
        <position position="158"/>
    </location>
    <ligand>
        <name>Zn(2+)</name>
        <dbReference type="ChEBI" id="CHEBI:29105"/>
    </ligand>
</feature>
<feature type="binding site" evidence="1">
    <location>
        <position position="162"/>
    </location>
    <ligand>
        <name>Zn(2+)</name>
        <dbReference type="ChEBI" id="CHEBI:29105"/>
    </ligand>
</feature>
<feature type="binding site" evidence="1">
    <location>
        <position position="186"/>
    </location>
    <ligand>
        <name>Zn(2+)</name>
        <dbReference type="ChEBI" id="CHEBI:29105"/>
    </ligand>
</feature>
<feature type="binding site" evidence="1">
    <location>
        <position position="189"/>
    </location>
    <ligand>
        <name>Zn(2+)</name>
        <dbReference type="ChEBI" id="CHEBI:29105"/>
    </ligand>
</feature>
<feature type="non-consecutive residues" evidence="3">
    <location>
        <begin position="111"/>
        <end position="112"/>
    </location>
</feature>
<feature type="non-terminal residue">
    <location>
        <position position="1"/>
    </location>
</feature>
<feature type="non-terminal residue">
    <location>
        <position position="246"/>
    </location>
</feature>
<comment type="catalytic activity">
    <reaction>
        <text>DNA(n) + a 2'-deoxyribonucleoside 5'-triphosphate = DNA(n+1) + diphosphate</text>
        <dbReference type="Rhea" id="RHEA:22508"/>
        <dbReference type="Rhea" id="RHEA-COMP:17339"/>
        <dbReference type="Rhea" id="RHEA-COMP:17340"/>
        <dbReference type="ChEBI" id="CHEBI:33019"/>
        <dbReference type="ChEBI" id="CHEBI:61560"/>
        <dbReference type="ChEBI" id="CHEBI:173112"/>
        <dbReference type="EC" id="2.7.7.49"/>
    </reaction>
</comment>
<evidence type="ECO:0000255" key="1">
    <source>
        <dbReference type="PROSITE-ProRule" id="PRU00450"/>
    </source>
</evidence>
<evidence type="ECO:0000255" key="2">
    <source>
        <dbReference type="PROSITE-ProRule" id="PRU00457"/>
    </source>
</evidence>
<evidence type="ECO:0000305" key="3"/>
<protein>
    <recommendedName>
        <fullName>Retrovirus-related Pol polyprotein</fullName>
    </recommendedName>
    <domain>
        <recommendedName>
            <fullName>Reverse transcriptase</fullName>
            <ecNumber>2.7.7.49</ecNumber>
        </recommendedName>
    </domain>
    <domain>
        <recommendedName>
            <fullName>Endonuclease</fullName>
        </recommendedName>
    </domain>
</protein>
<proteinExistence type="predicted"/>
<gene>
    <name type="primary">POL</name>
</gene>
<accession>P10399</accession>
<name>POL1_CHICK</name>
<keyword id="KW-0255">Endonuclease</keyword>
<keyword id="KW-0378">Hydrolase</keyword>
<keyword id="KW-0479">Metal-binding</keyword>
<keyword id="KW-0540">Nuclease</keyword>
<keyword id="KW-0548">Nucleotidyltransferase</keyword>
<keyword id="KW-1185">Reference proteome</keyword>
<keyword id="KW-0695">RNA-directed DNA polymerase</keyword>
<keyword id="KW-0808">Transferase</keyword>
<keyword id="KW-0862">Zinc</keyword>
<keyword id="KW-0863">Zinc-finger</keyword>
<organism>
    <name type="scientific">Gallus gallus</name>
    <name type="common">Chicken</name>
    <dbReference type="NCBI Taxonomy" id="9031"/>
    <lineage>
        <taxon>Eukaryota</taxon>
        <taxon>Metazoa</taxon>
        <taxon>Chordata</taxon>
        <taxon>Craniata</taxon>
        <taxon>Vertebrata</taxon>
        <taxon>Euteleostomi</taxon>
        <taxon>Archelosauria</taxon>
        <taxon>Archosauria</taxon>
        <taxon>Dinosauria</taxon>
        <taxon>Saurischia</taxon>
        <taxon>Theropoda</taxon>
        <taxon>Coelurosauria</taxon>
        <taxon>Aves</taxon>
        <taxon>Neognathae</taxon>
        <taxon>Galloanserae</taxon>
        <taxon>Galliformes</taxon>
        <taxon>Phasianidae</taxon>
        <taxon>Phasianinae</taxon>
        <taxon>Gallus</taxon>
    </lineage>
</organism>
<dbReference type="EC" id="2.7.7.49"/>
<dbReference type="EMBL" id="K03271">
    <property type="status" value="NOT_ANNOTATED_CDS"/>
    <property type="molecule type" value="Genomic_DNA"/>
</dbReference>
<dbReference type="EMBL" id="K03272">
    <property type="status" value="NOT_ANNOTATED_CDS"/>
    <property type="molecule type" value="Genomic_DNA"/>
</dbReference>
<dbReference type="PIR" id="A38044">
    <property type="entry name" value="A25779"/>
</dbReference>
<dbReference type="SMR" id="P10399"/>
<dbReference type="FunCoup" id="P10399">
    <property type="interactions" value="125"/>
</dbReference>
<dbReference type="VEuPathDB" id="HostDB:LOC100859106"/>
<dbReference type="VEuPathDB" id="HostDB:LOC121109412"/>
<dbReference type="InParanoid" id="P10399"/>
<dbReference type="PhylomeDB" id="P10399"/>
<dbReference type="Proteomes" id="UP000000539">
    <property type="component" value="Unassembled WGS sequence"/>
</dbReference>
<dbReference type="GO" id="GO:0004519">
    <property type="term" value="F:endonuclease activity"/>
    <property type="evidence" value="ECO:0007669"/>
    <property type="project" value="UniProtKB-KW"/>
</dbReference>
<dbReference type="GO" id="GO:0035613">
    <property type="term" value="F:RNA stem-loop binding"/>
    <property type="evidence" value="ECO:0000318"/>
    <property type="project" value="GO_Central"/>
</dbReference>
<dbReference type="GO" id="GO:0003964">
    <property type="term" value="F:RNA-directed DNA polymerase activity"/>
    <property type="evidence" value="ECO:0007669"/>
    <property type="project" value="UniProtKB-KW"/>
</dbReference>
<dbReference type="GO" id="GO:0008270">
    <property type="term" value="F:zinc ion binding"/>
    <property type="evidence" value="ECO:0007669"/>
    <property type="project" value="UniProtKB-KW"/>
</dbReference>
<dbReference type="GO" id="GO:0015074">
    <property type="term" value="P:DNA integration"/>
    <property type="evidence" value="ECO:0007669"/>
    <property type="project" value="InterPro"/>
</dbReference>
<dbReference type="Gene3D" id="1.10.10.200">
    <property type="match status" value="1"/>
</dbReference>
<dbReference type="Gene3D" id="3.30.420.10">
    <property type="entry name" value="Ribonuclease H-like superfamily/Ribonuclease H"/>
    <property type="match status" value="1"/>
</dbReference>
<dbReference type="InterPro" id="IPR017856">
    <property type="entry name" value="Integrase-like_N"/>
</dbReference>
<dbReference type="InterPro" id="IPR001584">
    <property type="entry name" value="Integrase_cat-core"/>
</dbReference>
<dbReference type="InterPro" id="IPR003308">
    <property type="entry name" value="Integrase_Zn-bd_dom_N"/>
</dbReference>
<dbReference type="InterPro" id="IPR036397">
    <property type="entry name" value="RNaseH_sf"/>
</dbReference>
<dbReference type="PANTHER" id="PTHR41694">
    <property type="entry name" value="ENDOGENOUS RETROVIRUS GROUP K MEMBER POL PROTEIN"/>
    <property type="match status" value="1"/>
</dbReference>
<dbReference type="PANTHER" id="PTHR41694:SF3">
    <property type="entry name" value="RNA-DIRECTED DNA POLYMERASE-RELATED"/>
    <property type="match status" value="1"/>
</dbReference>
<dbReference type="Pfam" id="PF02022">
    <property type="entry name" value="Integrase_Zn"/>
    <property type="match status" value="1"/>
</dbReference>
<dbReference type="SUPFAM" id="SSF46919">
    <property type="entry name" value="N-terminal Zn binding domain of HIV integrase"/>
    <property type="match status" value="1"/>
</dbReference>
<dbReference type="PROSITE" id="PS50994">
    <property type="entry name" value="INTEGRASE"/>
    <property type="match status" value="1"/>
</dbReference>
<dbReference type="PROSITE" id="PS50876">
    <property type="entry name" value="ZF_INTEGRASE"/>
    <property type="match status" value="1"/>
</dbReference>
<sequence length="246" mass="26354">SAQPVRAFTPWVELLSLLLSKARTSAFRDFGKDLDIVHLPRFFRDSQILPDEILLALHGFGGKLRYAGSLPIFELARPLRVSLRLRVVASPLDGPTVFTDASSSTGQGAVVLTARTAPAAVLHVRSHSDVPGFFTTGNALADQHAGHKVLTVREADLHSTLHLGARALSRTCSIPMAVAREVVQACPHCNSAPALSAGVNPRGIAPLDVWQTDFTLEPRLAPRSWLAVTVDTASTVIVATQHGRAN</sequence>